<evidence type="ECO:0000250" key="1"/>
<evidence type="ECO:0000305" key="2"/>
<name>ARGHA_MORPR</name>
<feature type="chain" id="PRO_0000186814" description="Bifunctional protein ArgHA">
    <location>
        <begin position="1"/>
        <end position="470" status="greater than"/>
    </location>
</feature>
<feature type="region of interest" description="Argininosuccinate lyase">
    <location>
        <begin position="1"/>
        <end position="470" status="greater than"/>
    </location>
</feature>
<feature type="non-terminal residue">
    <location>
        <position position="470"/>
    </location>
</feature>
<gene>
    <name type="primary">argHA</name>
</gene>
<organism>
    <name type="scientific">Moritella profunda</name>
    <dbReference type="NCBI Taxonomy" id="111291"/>
    <lineage>
        <taxon>Bacteria</taxon>
        <taxon>Pseudomonadati</taxon>
        <taxon>Pseudomonadota</taxon>
        <taxon>Gammaproteobacteria</taxon>
        <taxon>Alteromonadales</taxon>
        <taxon>Moritellaceae</taxon>
        <taxon>Moritella</taxon>
    </lineage>
</organism>
<comment type="catalytic activity">
    <reaction>
        <text>2-(N(omega)-L-arginino)succinate = fumarate + L-arginine</text>
        <dbReference type="Rhea" id="RHEA:24020"/>
        <dbReference type="ChEBI" id="CHEBI:29806"/>
        <dbReference type="ChEBI" id="CHEBI:32682"/>
        <dbReference type="ChEBI" id="CHEBI:57472"/>
        <dbReference type="EC" id="4.3.2.1"/>
    </reaction>
</comment>
<comment type="catalytic activity">
    <reaction>
        <text>L-glutamate + acetyl-CoA = N-acetyl-L-glutamate + CoA + H(+)</text>
        <dbReference type="Rhea" id="RHEA:24292"/>
        <dbReference type="ChEBI" id="CHEBI:15378"/>
        <dbReference type="ChEBI" id="CHEBI:29985"/>
        <dbReference type="ChEBI" id="CHEBI:44337"/>
        <dbReference type="ChEBI" id="CHEBI:57287"/>
        <dbReference type="ChEBI" id="CHEBI:57288"/>
        <dbReference type="EC" id="2.3.1.1"/>
    </reaction>
</comment>
<comment type="pathway">
    <text>Amino-acid biosynthesis; L-arginine biosynthesis; N(2)-acetyl-L-ornithine from L-glutamate: step 1/4.</text>
</comment>
<comment type="pathway">
    <text>Amino-acid biosynthesis; L-arginine biosynthesis; L-arginine from L-ornithine and carbamoyl phosphate: step 3/3.</text>
</comment>
<comment type="subcellular location">
    <subcellularLocation>
        <location evidence="1">Cytoplasm</location>
    </subcellularLocation>
</comment>
<comment type="miscellaneous">
    <text>In bacteria which possess the bifunctional enzyme ornithine acetyltransferase/N-acetylglutamate synthase (ArgJ), ArgA fulfills an anaplerotic role.</text>
</comment>
<comment type="similarity">
    <text evidence="2">In the N-terminal section; belongs to the lyase 1 family. Argininosuccinate lyase subfamily.</text>
</comment>
<comment type="similarity">
    <text evidence="2">In the C-terminal section; belongs to the acetyltransferase family. ArgA subfamily.</text>
</comment>
<protein>
    <recommendedName>
        <fullName>Bifunctional protein ArgHA</fullName>
    </recommendedName>
    <domain>
        <recommendedName>
            <fullName>Argininosuccinate lyase</fullName>
            <shortName>ASAL</shortName>
            <shortName>Arginosuccinase</shortName>
            <ecNumber>4.3.2.1</ecNumber>
        </recommendedName>
    </domain>
    <domain>
        <recommendedName>
            <fullName>Amino-acid acetyltransferase</fullName>
            <ecNumber>2.3.1.1</ecNumber>
        </recommendedName>
        <alternativeName>
            <fullName>N-acetylglutamate synthase</fullName>
            <shortName>AGS</shortName>
            <shortName>NAGS</shortName>
        </alternativeName>
    </domain>
</protein>
<reference key="1">
    <citation type="journal article" date="2000" name="J. Bacteriol.">
        <title>Evolution of arginine biosynthesis in the bacterial domain: novel gene-enzyme relationships from psychrophilic Moritella strains (Vibrionaceae) and evolutionary significance of N-alpha-acetyl ornithinase.</title>
        <authorList>
            <person name="Xu Y."/>
            <person name="Liang Z."/>
            <person name="Legrain C."/>
            <person name="Ruger H.J."/>
            <person name="Glansdorff N."/>
        </authorList>
    </citation>
    <scope>NUCLEOTIDE SEQUENCE [GENOMIC DNA]</scope>
    <source>
        <strain>2674</strain>
    </source>
</reference>
<keyword id="KW-0012">Acyltransferase</keyword>
<keyword id="KW-0028">Amino-acid biosynthesis</keyword>
<keyword id="KW-0055">Arginine biosynthesis</keyword>
<keyword id="KW-0963">Cytoplasm</keyword>
<keyword id="KW-0456">Lyase</keyword>
<keyword id="KW-0511">Multifunctional enzyme</keyword>
<keyword id="KW-0808">Transferase</keyword>
<dbReference type="EC" id="4.3.2.1"/>
<dbReference type="EC" id="2.3.1.1"/>
<dbReference type="EMBL" id="AJ252020">
    <property type="protein sequence ID" value="CAB95018.1"/>
    <property type="molecule type" value="Genomic_DNA"/>
</dbReference>
<dbReference type="SMR" id="Q9K3D7"/>
<dbReference type="UniPathway" id="UPA00068">
    <property type="reaction ID" value="UER00106"/>
</dbReference>
<dbReference type="UniPathway" id="UPA00068">
    <property type="reaction ID" value="UER00114"/>
</dbReference>
<dbReference type="GO" id="GO:0005829">
    <property type="term" value="C:cytosol"/>
    <property type="evidence" value="ECO:0007669"/>
    <property type="project" value="TreeGrafter"/>
</dbReference>
<dbReference type="GO" id="GO:0004056">
    <property type="term" value="F:argininosuccinate lyase activity"/>
    <property type="evidence" value="ECO:0007669"/>
    <property type="project" value="UniProtKB-EC"/>
</dbReference>
<dbReference type="GO" id="GO:0004042">
    <property type="term" value="F:L-glutamate N-acetyltransferase activity"/>
    <property type="evidence" value="ECO:0007669"/>
    <property type="project" value="RHEA"/>
</dbReference>
<dbReference type="GO" id="GO:0042450">
    <property type="term" value="P:arginine biosynthetic process via ornithine"/>
    <property type="evidence" value="ECO:0007669"/>
    <property type="project" value="InterPro"/>
</dbReference>
<dbReference type="GO" id="GO:0006526">
    <property type="term" value="P:L-arginine biosynthetic process"/>
    <property type="evidence" value="ECO:0007669"/>
    <property type="project" value="UniProtKB-UniPathway"/>
</dbReference>
<dbReference type="CDD" id="cd01359">
    <property type="entry name" value="Argininosuccinate_lyase"/>
    <property type="match status" value="1"/>
</dbReference>
<dbReference type="FunFam" id="1.10.40.30:FF:000001">
    <property type="entry name" value="Argininosuccinate lyase"/>
    <property type="match status" value="1"/>
</dbReference>
<dbReference type="FunFam" id="1.20.200.10:FF:000006">
    <property type="entry name" value="Argininosuccinate lyase"/>
    <property type="match status" value="1"/>
</dbReference>
<dbReference type="Gene3D" id="1.10.40.30">
    <property type="entry name" value="Fumarase/aspartase (C-terminal domain)"/>
    <property type="match status" value="1"/>
</dbReference>
<dbReference type="Gene3D" id="1.20.200.10">
    <property type="entry name" value="Fumarase/aspartase (Central domain)"/>
    <property type="match status" value="1"/>
</dbReference>
<dbReference type="Gene3D" id="1.10.275.10">
    <property type="entry name" value="Fumarase/aspartase (N-terminal domain)"/>
    <property type="match status" value="1"/>
</dbReference>
<dbReference type="HAMAP" id="MF_00006">
    <property type="entry name" value="Arg_succ_lyase"/>
    <property type="match status" value="1"/>
</dbReference>
<dbReference type="InterPro" id="IPR029419">
    <property type="entry name" value="Arg_succ_lyase_C"/>
</dbReference>
<dbReference type="InterPro" id="IPR009049">
    <property type="entry name" value="Argininosuccinate_lyase"/>
</dbReference>
<dbReference type="InterPro" id="IPR024083">
    <property type="entry name" value="Fumarase/histidase_N"/>
</dbReference>
<dbReference type="InterPro" id="IPR020557">
    <property type="entry name" value="Fumarate_lyase_CS"/>
</dbReference>
<dbReference type="InterPro" id="IPR000362">
    <property type="entry name" value="Fumarate_lyase_fam"/>
</dbReference>
<dbReference type="InterPro" id="IPR022761">
    <property type="entry name" value="Fumarate_lyase_N"/>
</dbReference>
<dbReference type="InterPro" id="IPR008948">
    <property type="entry name" value="L-Aspartase-like"/>
</dbReference>
<dbReference type="NCBIfam" id="TIGR00838">
    <property type="entry name" value="argH"/>
    <property type="match status" value="1"/>
</dbReference>
<dbReference type="NCBIfam" id="NF008964">
    <property type="entry name" value="PRK12308.1"/>
    <property type="match status" value="1"/>
</dbReference>
<dbReference type="PANTHER" id="PTHR43814">
    <property type="entry name" value="ARGININOSUCCINATE LYASE"/>
    <property type="match status" value="1"/>
</dbReference>
<dbReference type="PANTHER" id="PTHR43814:SF1">
    <property type="entry name" value="ARGININOSUCCINATE LYASE"/>
    <property type="match status" value="1"/>
</dbReference>
<dbReference type="Pfam" id="PF14698">
    <property type="entry name" value="ASL_C2"/>
    <property type="match status" value="1"/>
</dbReference>
<dbReference type="Pfam" id="PF00206">
    <property type="entry name" value="Lyase_1"/>
    <property type="match status" value="1"/>
</dbReference>
<dbReference type="PRINTS" id="PR00145">
    <property type="entry name" value="ARGSUCLYASE"/>
</dbReference>
<dbReference type="PRINTS" id="PR00149">
    <property type="entry name" value="FUMRATELYASE"/>
</dbReference>
<dbReference type="SUPFAM" id="SSF48557">
    <property type="entry name" value="L-aspartase-like"/>
    <property type="match status" value="1"/>
</dbReference>
<dbReference type="PROSITE" id="PS00163">
    <property type="entry name" value="FUMARATE_LYASES"/>
    <property type="match status" value="1"/>
</dbReference>
<proteinExistence type="inferred from homology"/>
<sequence length="470" mass="51907">MALWGGRFSQAADARFKNFNDSLRFDYRLAEQDITGSVAWSKALVSVGILTQDEQLTIEAALNDLKLAVLENPEQILQSDAEDIHSWVETQLIAKVGDLGKKLHTGRSRNDQVATDLKLWCKQQGEQLLMQLDKTQQQLVSLAREHQHTVLPGYTHLQRAQPVTFSHWCLAYVEMLERDFSRLTDCLKRLDTCPLGSGALAGTAYPMDRTELAHTLGFASATLNSLDSVSDRDHVMELMSTASMSMIHLSRLAEDLIFYNSGESNFIELADAVTSGSSLMPQKKNPDALELIRGKTGRVFGSLSAMLMTLKALPLAYNKDMQEDKEGLFDALDTWSDCLEMAAMSLVGMKINEERTKEAALGGYSNATELADYLVAKGVPFRDSHHIVGEAVVAAIAKGVPLEALTLAEFKAFDVLIEDDVYHHLSLDETLAKRKAQGGVSPVQVEFALTNAEKRLEERDTSGISIRAAR</sequence>
<accession>Q9K3D7</accession>